<feature type="chain" id="PRO_1000213966" description="UPF0210 protein Mbur_0828">
    <location>
        <begin position="1"/>
        <end position="453"/>
    </location>
</feature>
<proteinExistence type="inferred from homology"/>
<dbReference type="EMBL" id="CP000300">
    <property type="protein sequence ID" value="ABE51782.1"/>
    <property type="molecule type" value="Genomic_DNA"/>
</dbReference>
<dbReference type="RefSeq" id="WP_011498935.1">
    <property type="nucleotide sequence ID" value="NC_007955.1"/>
</dbReference>
<dbReference type="SMR" id="Q12XP4"/>
<dbReference type="STRING" id="259564.Mbur_0828"/>
<dbReference type="GeneID" id="3996733"/>
<dbReference type="KEGG" id="mbu:Mbur_0828"/>
<dbReference type="HOGENOM" id="CLU_048704_0_0_2"/>
<dbReference type="OrthoDB" id="21376at2157"/>
<dbReference type="Proteomes" id="UP000001979">
    <property type="component" value="Chromosome"/>
</dbReference>
<dbReference type="CDD" id="cd08025">
    <property type="entry name" value="RNR_PFL_like_DUF711"/>
    <property type="match status" value="1"/>
</dbReference>
<dbReference type="Gene3D" id="3.20.70.20">
    <property type="match status" value="1"/>
</dbReference>
<dbReference type="HAMAP" id="MF_01221">
    <property type="entry name" value="UPF0210"/>
    <property type="match status" value="1"/>
</dbReference>
<dbReference type="InterPro" id="IPR007841">
    <property type="entry name" value="UPF0210"/>
</dbReference>
<dbReference type="NCBIfam" id="NF003700">
    <property type="entry name" value="PRK05313.1"/>
    <property type="match status" value="1"/>
</dbReference>
<dbReference type="PANTHER" id="PTHR37560:SF1">
    <property type="entry name" value="UPF0210 PROTEIN MJ1665"/>
    <property type="match status" value="1"/>
</dbReference>
<dbReference type="PANTHER" id="PTHR37560">
    <property type="entry name" value="UPF0210 PROTEIN SPR0218"/>
    <property type="match status" value="1"/>
</dbReference>
<dbReference type="Pfam" id="PF05167">
    <property type="entry name" value="DUF711"/>
    <property type="match status" value="1"/>
</dbReference>
<dbReference type="SUPFAM" id="SSF51998">
    <property type="entry name" value="PFL-like glycyl radical enzymes"/>
    <property type="match status" value="1"/>
</dbReference>
<gene>
    <name type="ordered locus">Mbur_0828</name>
</gene>
<organism>
    <name type="scientific">Methanococcoides burtonii (strain DSM 6242 / NBRC 107633 / OCM 468 / ACE-M)</name>
    <dbReference type="NCBI Taxonomy" id="259564"/>
    <lineage>
        <taxon>Archaea</taxon>
        <taxon>Methanobacteriati</taxon>
        <taxon>Methanobacteriota</taxon>
        <taxon>Stenosarchaea group</taxon>
        <taxon>Methanomicrobia</taxon>
        <taxon>Methanosarcinales</taxon>
        <taxon>Methanosarcinaceae</taxon>
        <taxon>Methanococcoides</taxon>
    </lineage>
</organism>
<name>Y828_METBU</name>
<protein>
    <recommendedName>
        <fullName evidence="1">UPF0210 protein Mbur_0828</fullName>
    </recommendedName>
</protein>
<comment type="similarity">
    <text evidence="1">Belongs to the UPF0210 family.</text>
</comment>
<reference key="1">
    <citation type="journal article" date="2009" name="ISME J.">
        <title>The genome sequence of the psychrophilic archaeon, Methanococcoides burtonii: the role of genome evolution in cold adaptation.</title>
        <authorList>
            <person name="Allen M.A."/>
            <person name="Lauro F.M."/>
            <person name="Williams T.J."/>
            <person name="Burg D."/>
            <person name="Siddiqui K.S."/>
            <person name="De Francisci D."/>
            <person name="Chong K.W."/>
            <person name="Pilak O."/>
            <person name="Chew H.H."/>
            <person name="De Maere M.Z."/>
            <person name="Ting L."/>
            <person name="Katrib M."/>
            <person name="Ng C."/>
            <person name="Sowers K.R."/>
            <person name="Galperin M.Y."/>
            <person name="Anderson I.J."/>
            <person name="Ivanova N."/>
            <person name="Dalin E."/>
            <person name="Martinez M."/>
            <person name="Lapidus A."/>
            <person name="Hauser L."/>
            <person name="Land M."/>
            <person name="Thomas T."/>
            <person name="Cavicchioli R."/>
        </authorList>
    </citation>
    <scope>NUCLEOTIDE SEQUENCE [LARGE SCALE GENOMIC DNA]</scope>
    <source>
        <strain>DSM 6242 / NBRC 107633 / OCM 468 / ACE-M</strain>
    </source>
</reference>
<sequence>MLIHPEEILETIHMIKAENFDIRTVTMGINLRGCCHSDIDVFNKNIYNKITGYAKELVRTTEEVQNLYGIPITNKRIAVTPIAIVAESCNTEDYVSIAKTLDRAAEDVGIDFIGGFSALVHKGITPGDMKLINSIPQALASTKKVCASINVATTKAGINMDAVAMMGHIVKKTAEATKDADGIGCAKLVIFANAPEDNPFMAGAFHGIGEPDCVINVGVSGPGVVNSAVRELKDPDLGEISEAIKKTAFKITRMGEMVGREVSRRLNVDFGVLDLSLAPTPEIGDSVAAILEAMGLETCGTHGTTAALALLNDAVKKGGSMASSYVGGLSGAFIPVSEDAGMIRAVELGALSLEKLEAMTSVCSVGLDMIAIPGDTSAATISAIIADEMAIGMINKKTTAVRLIPAPGKKVGDSVEFGGLLGRAPVMKVSEFSSEKFIARGGRIPAPIQALTN</sequence>
<accession>Q12XP4</accession>
<evidence type="ECO:0000255" key="1">
    <source>
        <dbReference type="HAMAP-Rule" id="MF_01221"/>
    </source>
</evidence>